<keyword id="KW-0067">ATP-binding</keyword>
<keyword id="KW-0997">Cell inner membrane</keyword>
<keyword id="KW-1003">Cell membrane</keyword>
<keyword id="KW-0472">Membrane</keyword>
<keyword id="KW-0547">Nucleotide-binding</keyword>
<keyword id="KW-1185">Reference proteome</keyword>
<keyword id="KW-1278">Translocase</keyword>
<keyword id="KW-0812">Transmembrane</keyword>
<keyword id="KW-1133">Transmembrane helix</keyword>
<keyword id="KW-0813">Transport</keyword>
<dbReference type="EC" id="7.2.2.-" evidence="1"/>
<dbReference type="EMBL" id="LT708304">
    <property type="protein sequence ID" value="SIT99987.1"/>
    <property type="molecule type" value="Genomic_DNA"/>
</dbReference>
<dbReference type="RefSeq" id="NP_855038.1">
    <property type="nucleotide sequence ID" value="NC_002945.3"/>
</dbReference>
<dbReference type="RefSeq" id="WP_003900322.1">
    <property type="nucleotide sequence ID" value="NC_002945.4"/>
</dbReference>
<dbReference type="SMR" id="P63394"/>
<dbReference type="GeneID" id="45425328"/>
<dbReference type="KEGG" id="mbo:BQ2027_MB1384"/>
<dbReference type="PATRIC" id="fig|233413.5.peg.1516"/>
<dbReference type="Proteomes" id="UP000001419">
    <property type="component" value="Chromosome"/>
</dbReference>
<dbReference type="GO" id="GO:0005886">
    <property type="term" value="C:plasma membrane"/>
    <property type="evidence" value="ECO:0007669"/>
    <property type="project" value="UniProtKB-SubCell"/>
</dbReference>
<dbReference type="GO" id="GO:0140359">
    <property type="term" value="F:ABC-type transporter activity"/>
    <property type="evidence" value="ECO:0007669"/>
    <property type="project" value="InterPro"/>
</dbReference>
<dbReference type="GO" id="GO:0005524">
    <property type="term" value="F:ATP binding"/>
    <property type="evidence" value="ECO:0007669"/>
    <property type="project" value="UniProtKB-KW"/>
</dbReference>
<dbReference type="GO" id="GO:0016887">
    <property type="term" value="F:ATP hydrolysis activity"/>
    <property type="evidence" value="ECO:0007669"/>
    <property type="project" value="InterPro"/>
</dbReference>
<dbReference type="GO" id="GO:0034040">
    <property type="term" value="F:ATPase-coupled lipid transmembrane transporter activity"/>
    <property type="evidence" value="ECO:0007669"/>
    <property type="project" value="TreeGrafter"/>
</dbReference>
<dbReference type="FunFam" id="3.40.50.300:FF:000221">
    <property type="entry name" value="Multidrug ABC transporter ATP-binding protein"/>
    <property type="match status" value="1"/>
</dbReference>
<dbReference type="Gene3D" id="1.20.1560.10">
    <property type="entry name" value="ABC transporter type 1, transmembrane domain"/>
    <property type="match status" value="1"/>
</dbReference>
<dbReference type="Gene3D" id="3.40.50.300">
    <property type="entry name" value="P-loop containing nucleotide triphosphate hydrolases"/>
    <property type="match status" value="1"/>
</dbReference>
<dbReference type="InterPro" id="IPR003593">
    <property type="entry name" value="AAA+_ATPase"/>
</dbReference>
<dbReference type="InterPro" id="IPR011527">
    <property type="entry name" value="ABC1_TM_dom"/>
</dbReference>
<dbReference type="InterPro" id="IPR036640">
    <property type="entry name" value="ABC1_TM_sf"/>
</dbReference>
<dbReference type="InterPro" id="IPR003439">
    <property type="entry name" value="ABC_transporter-like_ATP-bd"/>
</dbReference>
<dbReference type="InterPro" id="IPR017871">
    <property type="entry name" value="ABC_transporter-like_CS"/>
</dbReference>
<dbReference type="InterPro" id="IPR027417">
    <property type="entry name" value="P-loop_NTPase"/>
</dbReference>
<dbReference type="InterPro" id="IPR039421">
    <property type="entry name" value="Type_1_exporter"/>
</dbReference>
<dbReference type="PANTHER" id="PTHR24221">
    <property type="entry name" value="ATP-BINDING CASSETTE SUB-FAMILY B"/>
    <property type="match status" value="1"/>
</dbReference>
<dbReference type="PANTHER" id="PTHR24221:SF654">
    <property type="entry name" value="ATP-BINDING CASSETTE SUB-FAMILY B MEMBER 6"/>
    <property type="match status" value="1"/>
</dbReference>
<dbReference type="Pfam" id="PF00005">
    <property type="entry name" value="ABC_tran"/>
    <property type="match status" value="1"/>
</dbReference>
<dbReference type="SMART" id="SM00382">
    <property type="entry name" value="AAA"/>
    <property type="match status" value="1"/>
</dbReference>
<dbReference type="SUPFAM" id="SSF90123">
    <property type="entry name" value="ABC transporter transmembrane region"/>
    <property type="match status" value="1"/>
</dbReference>
<dbReference type="SUPFAM" id="SSF52540">
    <property type="entry name" value="P-loop containing nucleoside triphosphate hydrolases"/>
    <property type="match status" value="1"/>
</dbReference>
<dbReference type="PROSITE" id="PS50929">
    <property type="entry name" value="ABC_TM1F"/>
    <property type="match status" value="1"/>
</dbReference>
<dbReference type="PROSITE" id="PS00211">
    <property type="entry name" value="ABC_TRANSPORTER_1"/>
    <property type="match status" value="1"/>
</dbReference>
<dbReference type="PROSITE" id="PS50893">
    <property type="entry name" value="ABC_TRANSPORTER_2"/>
    <property type="match status" value="1"/>
</dbReference>
<protein>
    <recommendedName>
        <fullName evidence="1">Mycobactin import ATP-binding/permease protein IrtB</fullName>
        <ecNumber evidence="1">7.2.2.-</ecNumber>
    </recommendedName>
</protein>
<proteinExistence type="inferred from homology"/>
<accession>P63394</accession>
<accession>A0A1R3XY39</accession>
<accession>Q11019</accession>
<accession>X2BHN8</accession>
<name>IRTB_MYCBO</name>
<comment type="function">
    <text evidence="1">Part of the ABC transporter complex IrtAB involved in the import of iron-bound mycobactin (Fe-MBT) and carboxymycobactin (Fe-cMBT). Transmembrane domains (TMD) form a pore in the membrane and the ATP-binding domain (NBD) is responsible for energy generation.</text>
</comment>
<comment type="subunit">
    <text evidence="1">Forms a heterodimer with IrtA.</text>
</comment>
<comment type="subcellular location">
    <subcellularLocation>
        <location evidence="1">Cell inner membrane</location>
        <topology evidence="1">Multi-pass membrane protein</topology>
    </subcellularLocation>
</comment>
<comment type="domain">
    <text evidence="1">In IrtB the ATP-binding domain (NBD) and the transmembrane domain (TMD) are fused.</text>
</comment>
<comment type="similarity">
    <text evidence="4">Belongs to the ABC transporter superfamily. Siderophore-Fe(3+) uptake transporter (SIUT) (TC 3.A.1.21) family.</text>
</comment>
<evidence type="ECO:0000250" key="1">
    <source>
        <dbReference type="UniProtKB" id="G7CBF6"/>
    </source>
</evidence>
<evidence type="ECO:0000255" key="2">
    <source>
        <dbReference type="PROSITE-ProRule" id="PRU00434"/>
    </source>
</evidence>
<evidence type="ECO:0000255" key="3">
    <source>
        <dbReference type="PROSITE-ProRule" id="PRU00441"/>
    </source>
</evidence>
<evidence type="ECO:0000305" key="4"/>
<feature type="chain" id="PRO_0000093258" description="Mycobactin import ATP-binding/permease protein IrtB">
    <location>
        <begin position="1"/>
        <end position="579"/>
    </location>
</feature>
<feature type="topological domain" description="Cytoplasmic" evidence="4">
    <location>
        <begin position="1"/>
        <end position="16"/>
    </location>
</feature>
<feature type="transmembrane region" description="Helical" evidence="3">
    <location>
        <begin position="17"/>
        <end position="37"/>
    </location>
</feature>
<feature type="topological domain" description="Periplasmic" evidence="4">
    <location>
        <begin position="38"/>
        <end position="52"/>
    </location>
</feature>
<feature type="transmembrane region" description="Helical" evidence="3">
    <location>
        <begin position="53"/>
        <end position="73"/>
    </location>
</feature>
<feature type="topological domain" description="Cytoplasmic" evidence="4">
    <location>
        <begin position="74"/>
        <end position="123"/>
    </location>
</feature>
<feature type="transmembrane region" description="Helical" evidence="3">
    <location>
        <begin position="124"/>
        <end position="146"/>
    </location>
</feature>
<feature type="topological domain" description="Periplasmic" evidence="4">
    <location>
        <begin position="147"/>
        <end position="155"/>
    </location>
</feature>
<feature type="transmembrane region" description="Helical" evidence="3">
    <location>
        <begin position="156"/>
        <end position="178"/>
    </location>
</feature>
<feature type="topological domain" description="Cytoplasmic" evidence="4">
    <location>
        <begin position="179"/>
        <end position="237"/>
    </location>
</feature>
<feature type="transmembrane region" description="Helical" evidence="3">
    <location>
        <begin position="238"/>
        <end position="258"/>
    </location>
</feature>
<feature type="topological domain" description="Periplasmic" evidence="4">
    <location>
        <begin position="259"/>
        <end position="579"/>
    </location>
</feature>
<feature type="domain" description="ABC transmembrane type-1" evidence="3">
    <location>
        <begin position="17"/>
        <end position="299"/>
    </location>
</feature>
<feature type="domain" description="ABC transporter" evidence="2">
    <location>
        <begin position="332"/>
        <end position="567"/>
    </location>
</feature>
<feature type="binding site" evidence="2">
    <location>
        <begin position="366"/>
        <end position="373"/>
    </location>
    <ligand>
        <name>ATP</name>
        <dbReference type="ChEBI" id="CHEBI:30616"/>
    </ligand>
</feature>
<sequence>MIRTWIALVPNDHRARLIGFALLAFCSVVARAVGTVLLVPLMAALFGEAPQRAWLWLGWLSAATVAGWVLDAVTARIGIELGFAVLNHTQHDVADRLPVVRLDWFTAENTATARQAIAATGPELVGLVVNLVTPLTSAILLPAVIALALLPISWQLGVAALAGVPLLLGALWASAAFARRADTAADKANTALTERIIEFARTQQALRAARRVEPARSLVGNALASQHTATMRLLGMQIPGQLLFSIASQLALIVLAGTTAALTITGTLTVPEAIALIVVMVRYLEPFTAVSELAPALESTRATLGRIGSVLTAPVMVAGSGTWRDGAVVPRIEFDDVAFGYDGGSGPVLDGVSFCLQPGTTTAIVGPSGCGKSTILALIAGLHQPTRGRVLIDGTDVATLDARAQQAVCSVVFQHPYLFHGTIRDNVFAADPGASDDQFAQAVRLARVDELIARLPDGANTIVGEAGSALSGGERQRVSIARALLKAAPVLLVDEATSALDAENEAAVVDALAADPRSRTRVIVAHRLASIRHADRVLFVDDGRVVEDGSISELLTAGGRFSQFWRQQHEAAEWQILAE</sequence>
<reference key="1">
    <citation type="journal article" date="2003" name="Proc. Natl. Acad. Sci. U.S.A.">
        <title>The complete genome sequence of Mycobacterium bovis.</title>
        <authorList>
            <person name="Garnier T."/>
            <person name="Eiglmeier K."/>
            <person name="Camus J.-C."/>
            <person name="Medina N."/>
            <person name="Mansoor H."/>
            <person name="Pryor M."/>
            <person name="Duthoy S."/>
            <person name="Grondin S."/>
            <person name="Lacroix C."/>
            <person name="Monsempe C."/>
            <person name="Simon S."/>
            <person name="Harris B."/>
            <person name="Atkin R."/>
            <person name="Doggett J."/>
            <person name="Mayes R."/>
            <person name="Keating L."/>
            <person name="Wheeler P.R."/>
            <person name="Parkhill J."/>
            <person name="Barrell B.G."/>
            <person name="Cole S.T."/>
            <person name="Gordon S.V."/>
            <person name="Hewinson R.G."/>
        </authorList>
    </citation>
    <scope>NUCLEOTIDE SEQUENCE [LARGE SCALE GENOMIC DNA]</scope>
    <source>
        <strain>ATCC BAA-935 / AF2122/97</strain>
    </source>
</reference>
<reference key="2">
    <citation type="journal article" date="2017" name="Genome Announc.">
        <title>Updated reference genome sequence and annotation of Mycobacterium bovis AF2122/97.</title>
        <authorList>
            <person name="Malone K.M."/>
            <person name="Farrell D."/>
            <person name="Stuber T.P."/>
            <person name="Schubert O.T."/>
            <person name="Aebersold R."/>
            <person name="Robbe-Austerman S."/>
            <person name="Gordon S.V."/>
        </authorList>
    </citation>
    <scope>NUCLEOTIDE SEQUENCE [LARGE SCALE GENOMIC DNA]</scope>
    <scope>GENOME REANNOTATION</scope>
    <source>
        <strain>ATCC BAA-935 / AF2122/97</strain>
    </source>
</reference>
<gene>
    <name type="primary">irtB</name>
    <name type="ordered locus">BQ2027_MB1384</name>
</gene>
<organism>
    <name type="scientific">Mycobacterium bovis (strain ATCC BAA-935 / AF2122/97)</name>
    <dbReference type="NCBI Taxonomy" id="233413"/>
    <lineage>
        <taxon>Bacteria</taxon>
        <taxon>Bacillati</taxon>
        <taxon>Actinomycetota</taxon>
        <taxon>Actinomycetes</taxon>
        <taxon>Mycobacteriales</taxon>
        <taxon>Mycobacteriaceae</taxon>
        <taxon>Mycobacterium</taxon>
        <taxon>Mycobacterium tuberculosis complex</taxon>
    </lineage>
</organism>